<accession>P55445</accession>
<organism>
    <name type="scientific">Sinorhizobium fredii (strain NBRC 101917 / NGR234)</name>
    <dbReference type="NCBI Taxonomy" id="394"/>
    <lineage>
        <taxon>Bacteria</taxon>
        <taxon>Pseudomonadati</taxon>
        <taxon>Pseudomonadota</taxon>
        <taxon>Alphaproteobacteria</taxon>
        <taxon>Hyphomicrobiales</taxon>
        <taxon>Rhizobiaceae</taxon>
        <taxon>Sinorhizobium/Ensifer group</taxon>
        <taxon>Sinorhizobium</taxon>
    </lineage>
</organism>
<dbReference type="EMBL" id="U00090">
    <property type="protein sequence ID" value="AAB91664.1"/>
    <property type="molecule type" value="Genomic_DNA"/>
</dbReference>
<dbReference type="RefSeq" id="NP_443852.1">
    <property type="nucleotide sequence ID" value="NC_000914.2"/>
</dbReference>
<dbReference type="KEGG" id="rhi:NGR_a03740"/>
<dbReference type="HOGENOM" id="CLU_1947105_0_0_5"/>
<dbReference type="Proteomes" id="UP000001054">
    <property type="component" value="Plasmid pNGR234a"/>
</dbReference>
<reference key="1">
    <citation type="journal article" date="1997" name="Nature">
        <title>Molecular basis of symbiosis between Rhizobium and legumes.</title>
        <authorList>
            <person name="Freiberg C.A."/>
            <person name="Fellay R."/>
            <person name="Bairoch A."/>
            <person name="Broughton W.J."/>
            <person name="Rosenthal A."/>
            <person name="Perret X."/>
        </authorList>
    </citation>
    <scope>NUCLEOTIDE SEQUENCE [LARGE SCALE GENOMIC DNA]</scope>
    <source>
        <strain>NBRC 101917 / NGR234</strain>
    </source>
</reference>
<reference key="2">
    <citation type="journal article" date="2009" name="Appl. Environ. Microbiol.">
        <title>Rhizobium sp. strain NGR234 possesses a remarkable number of secretion systems.</title>
        <authorList>
            <person name="Schmeisser C."/>
            <person name="Liesegang H."/>
            <person name="Krysciak D."/>
            <person name="Bakkou N."/>
            <person name="Le Quere A."/>
            <person name="Wollherr A."/>
            <person name="Heinemeyer I."/>
            <person name="Morgenstern B."/>
            <person name="Pommerening-Roeser A."/>
            <person name="Flores M."/>
            <person name="Palacios R."/>
            <person name="Brenner S."/>
            <person name="Gottschalk G."/>
            <person name="Schmitz R.A."/>
            <person name="Broughton W.J."/>
            <person name="Perret X."/>
            <person name="Strittmatter A.W."/>
            <person name="Streit W.R."/>
        </authorList>
    </citation>
    <scope>NUCLEOTIDE SEQUENCE [LARGE SCALE GENOMIC DNA]</scope>
    <source>
        <strain>NBRC 101917 / NGR234</strain>
    </source>
</reference>
<geneLocation type="plasmid">
    <name>sym pNGR234a</name>
</geneLocation>
<name>Y4FG_SINFN</name>
<keyword id="KW-0614">Plasmid</keyword>
<keyword id="KW-1185">Reference proteome</keyword>
<sequence length="129" mass="14523">MHPGSKTMRYPHPCRATMFEAVFRRRLDALGMTISGSLATSELRNTFRQETIMRHWAVSKEFSGMSPEERDERLLTIAHLEPIAAHVLASDDCIFDVSRIGADLMELDLRENGGSGHQASSETGFHHVR</sequence>
<gene>
    <name type="ordered locus">NGR_a03740</name>
    <name type="ORF">y4fG</name>
</gene>
<protein>
    <recommendedName>
        <fullName>Uncharacterized protein y4fG</fullName>
    </recommendedName>
</protein>
<feature type="chain" id="PRO_0000200838" description="Uncharacterized protein y4fG">
    <location>
        <begin position="1"/>
        <end position="129"/>
    </location>
</feature>
<proteinExistence type="predicted"/>